<organismHost>
    <name type="scientific">Haemophilus influenzae</name>
    <dbReference type="NCBI Taxonomy" id="727"/>
</organismHost>
<reference key="1">
    <citation type="journal article" date="1996" name="Nucleic Acids Res.">
        <title>The complete nucleotide sequence of bacteriophage HP1 DNA.</title>
        <authorList>
            <person name="Esposito D."/>
            <person name="Fitzmaurice W.P."/>
            <person name="Benjamin R.C."/>
            <person name="Goodman S.D."/>
            <person name="Waldman A.S."/>
            <person name="Scocca J.J."/>
        </authorList>
    </citation>
    <scope>NUCLEOTIDE SEQUENCE [LARGE SCALE GENOMIC DNA]</scope>
</reference>
<dbReference type="EMBL" id="U24159">
    <property type="protein sequence ID" value="AAB09200.1"/>
    <property type="molecule type" value="Genomic_DNA"/>
</dbReference>
<dbReference type="PIR" id="S69521">
    <property type="entry name" value="S69521"/>
</dbReference>
<dbReference type="RefSeq" id="NP_043484.1">
    <property type="nucleotide sequence ID" value="NC_001697.1"/>
</dbReference>
<dbReference type="SMR" id="P51717"/>
<dbReference type="GeneID" id="1261113"/>
<dbReference type="KEGG" id="vg:1261113"/>
<dbReference type="Proteomes" id="UP000001713">
    <property type="component" value="Segment"/>
</dbReference>
<dbReference type="GO" id="GO:0019028">
    <property type="term" value="C:viral capsid"/>
    <property type="evidence" value="ECO:0007669"/>
    <property type="project" value="UniProtKB-KW"/>
</dbReference>
<dbReference type="GO" id="GO:0099000">
    <property type="term" value="P:symbiont genome ejection through host cell envelope, contractile tail mechanism"/>
    <property type="evidence" value="ECO:0007669"/>
    <property type="project" value="UniProtKB-KW"/>
</dbReference>
<dbReference type="InterPro" id="IPR030935">
    <property type="entry name" value="PBSX_Proteobac"/>
</dbReference>
<dbReference type="InterPro" id="IPR006944">
    <property type="entry name" value="Phage/GTA_portal"/>
</dbReference>
<dbReference type="InterPro" id="IPR006430">
    <property type="entry name" value="Phage_portal_PBSX"/>
</dbReference>
<dbReference type="NCBIfam" id="TIGR01540">
    <property type="entry name" value="portal_PBSX"/>
    <property type="match status" value="1"/>
</dbReference>
<dbReference type="Pfam" id="PF04860">
    <property type="entry name" value="Phage_portal"/>
    <property type="match status" value="1"/>
</dbReference>
<dbReference type="PIRSF" id="PIRSF018494">
    <property type="entry name" value="PBSX_VPQ"/>
    <property type="match status" value="1"/>
</dbReference>
<sequence length="345" mass="38480">MKTNVKTDNKKGIVIAPINDRTFSLSEITASPALDYVGIGFDENYNCYLPPVNRHALAKLPHQNAQHGGILHSRANMVSATYEGGKALSKMEMRALCLNLIQFGDVGLLKVRNGFGQVVRLVPLSSLYLRVHKDGGYSYLMKKSLYDTAQEIYRYDAKDIIFIKLYDPMQQVYGSPDYVGGIQSALLNSDATVFRRRYFSNGAHMGFILYSTDPDLTEEMEEEIARKISESKGVGNFRSMFVNIAGGHPDGLKVIPIGDTGTKDEFANIKNISAQDVLTAHRFPAGLSGIIPTNTGGLGDPLKYREVYHYDEVMPLQEIIAETINQDPEIKNLLKIKFREQNFAK</sequence>
<name>PORTL_BPHC1</name>
<evidence type="ECO:0000250" key="1">
    <source>
        <dbReference type="UniProtKB" id="P25480"/>
    </source>
</evidence>
<evidence type="ECO:0000305" key="2"/>
<organism>
    <name type="scientific">Haemophilus phage HP1 (strain HP1c1)</name>
    <name type="common">Bacteriophage HP1</name>
    <dbReference type="NCBI Taxonomy" id="1289570"/>
    <lineage>
        <taxon>Viruses</taxon>
        <taxon>Duplodnaviria</taxon>
        <taxon>Heunggongvirae</taxon>
        <taxon>Uroviricota</taxon>
        <taxon>Caudoviricetes</taxon>
        <taxon>Peduoviridae</taxon>
        <taxon>Hpunavirus</taxon>
        <taxon>Haemophilus phage HP1</taxon>
    </lineage>
</organism>
<comment type="function">
    <text evidence="1">Forms the portal vertex of the capsid. This portal plays critical roles in head assembly, genome packaging, neck/tail attachment, and genome ejection. The portal protein multimerizes as a single ring-shaped homododecamer arranged around a central channel. Binds to the terminase subunits to form the packaging machine.</text>
</comment>
<comment type="subunit">
    <text evidence="1">Homododecamer.</text>
</comment>
<comment type="subcellular location">
    <subcellularLocation>
        <location evidence="1">Virion</location>
    </subcellularLocation>
</comment>
<comment type="similarity">
    <text evidence="2">Belongs to the phage portal family. PBSX subfamily.</text>
</comment>
<protein>
    <recommendedName>
        <fullName>Probable portal protein</fullName>
    </recommendedName>
    <alternativeName>
        <fullName>ORF15</fullName>
    </alternativeName>
</protein>
<feature type="chain" id="PRO_0000165314" description="Probable portal protein">
    <location>
        <begin position="1"/>
        <end position="345"/>
    </location>
</feature>
<proteinExistence type="inferred from homology"/>
<accession>P51717</accession>
<keyword id="KW-0167">Capsid protein</keyword>
<keyword id="KW-1185">Reference proteome</keyword>
<keyword id="KW-0118">Viral capsid assembly</keyword>
<keyword id="KW-1242">Viral contractile tail ejection system</keyword>
<keyword id="KW-1171">Viral genome ejection through host cell envelope</keyword>
<keyword id="KW-0231">Viral genome packaging</keyword>
<keyword id="KW-1162">Viral penetration into host cytoplasm</keyword>
<keyword id="KW-1188">Viral release from host cell</keyword>
<keyword id="KW-0946">Virion</keyword>
<keyword id="KW-1160">Virus entry into host cell</keyword>